<comment type="function">
    <text evidence="1">Nucleotide-binding protein.</text>
</comment>
<comment type="similarity">
    <text evidence="1">Belongs to the YajQ family.</text>
</comment>
<dbReference type="EMBL" id="CP001172">
    <property type="protein sequence ID" value="ACJ57306.1"/>
    <property type="molecule type" value="Genomic_DNA"/>
</dbReference>
<dbReference type="RefSeq" id="WP_001138893.1">
    <property type="nucleotide sequence ID" value="NZ_CP001172.1"/>
</dbReference>
<dbReference type="SMR" id="B7GWK1"/>
<dbReference type="HOGENOM" id="CLU_099839_1_0_6"/>
<dbReference type="Proteomes" id="UP000006924">
    <property type="component" value="Chromosome"/>
</dbReference>
<dbReference type="GO" id="GO:0005829">
    <property type="term" value="C:cytosol"/>
    <property type="evidence" value="ECO:0007669"/>
    <property type="project" value="TreeGrafter"/>
</dbReference>
<dbReference type="GO" id="GO:0000166">
    <property type="term" value="F:nucleotide binding"/>
    <property type="evidence" value="ECO:0007669"/>
    <property type="project" value="TreeGrafter"/>
</dbReference>
<dbReference type="CDD" id="cd11740">
    <property type="entry name" value="YajQ_like"/>
    <property type="match status" value="1"/>
</dbReference>
<dbReference type="Gene3D" id="3.30.70.860">
    <property type="match status" value="1"/>
</dbReference>
<dbReference type="Gene3D" id="3.30.70.990">
    <property type="entry name" value="YajQ-like, domain 2"/>
    <property type="match status" value="1"/>
</dbReference>
<dbReference type="HAMAP" id="MF_00632">
    <property type="entry name" value="YajQ"/>
    <property type="match status" value="1"/>
</dbReference>
<dbReference type="InterPro" id="IPR007551">
    <property type="entry name" value="DUF520"/>
</dbReference>
<dbReference type="InterPro" id="IPR035571">
    <property type="entry name" value="UPF0234-like_C"/>
</dbReference>
<dbReference type="InterPro" id="IPR035570">
    <property type="entry name" value="UPF0234_N"/>
</dbReference>
<dbReference type="InterPro" id="IPR036183">
    <property type="entry name" value="YajQ-like_sf"/>
</dbReference>
<dbReference type="NCBIfam" id="NF003819">
    <property type="entry name" value="PRK05412.1"/>
    <property type="match status" value="1"/>
</dbReference>
<dbReference type="PANTHER" id="PTHR30476">
    <property type="entry name" value="UPF0234 PROTEIN YAJQ"/>
    <property type="match status" value="1"/>
</dbReference>
<dbReference type="PANTHER" id="PTHR30476:SF0">
    <property type="entry name" value="UPF0234 PROTEIN YAJQ"/>
    <property type="match status" value="1"/>
</dbReference>
<dbReference type="Pfam" id="PF04461">
    <property type="entry name" value="DUF520"/>
    <property type="match status" value="1"/>
</dbReference>
<dbReference type="SUPFAM" id="SSF89963">
    <property type="entry name" value="YajQ-like"/>
    <property type="match status" value="2"/>
</dbReference>
<gene>
    <name type="ordered locus">ABBFA_000537</name>
</gene>
<evidence type="ECO:0000255" key="1">
    <source>
        <dbReference type="HAMAP-Rule" id="MF_00632"/>
    </source>
</evidence>
<feature type="chain" id="PRO_1000130587" description="Nucleotide-binding protein ABBFA_000537">
    <location>
        <begin position="1"/>
        <end position="162"/>
    </location>
</feature>
<reference key="1">
    <citation type="journal article" date="2008" name="J. Bacteriol.">
        <title>Comparative genome sequence analysis of multidrug-resistant Acinetobacter baumannii.</title>
        <authorList>
            <person name="Adams M.D."/>
            <person name="Goglin K."/>
            <person name="Molyneaux N."/>
            <person name="Hujer K.M."/>
            <person name="Lavender H."/>
            <person name="Jamison J.J."/>
            <person name="MacDonald I.J."/>
            <person name="Martin K.M."/>
            <person name="Russo T."/>
            <person name="Campagnari A.A."/>
            <person name="Hujer A.M."/>
            <person name="Bonomo R.A."/>
            <person name="Gill S.R."/>
        </authorList>
    </citation>
    <scope>NUCLEOTIDE SEQUENCE [LARGE SCALE GENOMIC DNA]</scope>
    <source>
        <strain>AB307-0294</strain>
    </source>
</reference>
<proteinExistence type="inferred from homology"/>
<keyword id="KW-0547">Nucleotide-binding</keyword>
<sequence length="162" mass="18698">MPSFDIVSELELFEVNHAVQNTQKEIATRFDFRGHDVSIELNEKNKEIKISTESDFQCEQVYNMLENHFYKRKIDVQALDPQKATASGKNFVQVIKLKDGLDSDTAKKINKAIKESGIKVQSSIQGDKIRVTDKKRDTLQQVMAFLREQQFGLPLQFNNFKD</sequence>
<name>Y537_ACIB3</name>
<protein>
    <recommendedName>
        <fullName evidence="1">Nucleotide-binding protein ABBFA_000537</fullName>
    </recommendedName>
</protein>
<organism>
    <name type="scientific">Acinetobacter baumannii (strain AB307-0294)</name>
    <dbReference type="NCBI Taxonomy" id="557600"/>
    <lineage>
        <taxon>Bacteria</taxon>
        <taxon>Pseudomonadati</taxon>
        <taxon>Pseudomonadota</taxon>
        <taxon>Gammaproteobacteria</taxon>
        <taxon>Moraxellales</taxon>
        <taxon>Moraxellaceae</taxon>
        <taxon>Acinetobacter</taxon>
        <taxon>Acinetobacter calcoaceticus/baumannii complex</taxon>
    </lineage>
</organism>
<accession>B7GWK1</accession>